<reference key="1">
    <citation type="journal article" date="2010" name="J. Bacteriol.">
        <title>Short-term signatures of evolutionary change in the Salmonella enterica serovar typhimurium 14028 genome.</title>
        <authorList>
            <person name="Jarvik T."/>
            <person name="Smillie C."/>
            <person name="Groisman E.A."/>
            <person name="Ochman H."/>
        </authorList>
    </citation>
    <scope>NUCLEOTIDE SEQUENCE [LARGE SCALE GENOMIC DNA]</scope>
    <source>
        <strain>14028s / SGSC 2262</strain>
    </source>
</reference>
<reference key="2">
    <citation type="journal article" date="2002" name="Infect. Immun.">
        <title>Genetic requirements for Salmonella-induced cytopathology in human monocyte-derived macrophages.</title>
        <authorList>
            <person name="Browne S.H."/>
            <person name="Lesnick M.L."/>
            <person name="Guiney D.G."/>
        </authorList>
    </citation>
    <scope>DISRUPTION PHENOTYPE</scope>
    <source>
        <strain>14028s / SGSC 2262</strain>
    </source>
</reference>
<organism>
    <name type="scientific">Salmonella typhimurium (strain 14028s / SGSC 2262)</name>
    <dbReference type="NCBI Taxonomy" id="588858"/>
    <lineage>
        <taxon>Bacteria</taxon>
        <taxon>Pseudomonadati</taxon>
        <taxon>Pseudomonadota</taxon>
        <taxon>Gammaproteobacteria</taxon>
        <taxon>Enterobacterales</taxon>
        <taxon>Enterobacteriaceae</taxon>
        <taxon>Salmonella</taxon>
    </lineage>
</organism>
<protein>
    <recommendedName>
        <fullName>Secretion system apparatus protein SsaV</fullName>
    </recommendedName>
</protein>
<feature type="chain" id="PRO_0000410494" description="Secretion system apparatus protein SsaV">
    <location>
        <begin position="1"/>
        <end position="681"/>
    </location>
</feature>
<feature type="transmembrane region" description="Helical" evidence="1">
    <location>
        <begin position="24"/>
        <end position="44"/>
    </location>
</feature>
<feature type="transmembrane region" description="Helical" evidence="1">
    <location>
        <begin position="48"/>
        <end position="68"/>
    </location>
</feature>
<feature type="transmembrane region" description="Helical" evidence="1">
    <location>
        <begin position="73"/>
        <end position="93"/>
    </location>
</feature>
<feature type="transmembrane region" description="Helical" evidence="1">
    <location>
        <begin position="118"/>
        <end position="138"/>
    </location>
</feature>
<feature type="transmembrane region" description="Helical" evidence="1">
    <location>
        <begin position="206"/>
        <end position="226"/>
    </location>
</feature>
<feature type="transmembrane region" description="Helical" evidence="1">
    <location>
        <begin position="244"/>
        <end position="264"/>
    </location>
</feature>
<feature type="transmembrane region" description="Helical" evidence="1">
    <location>
        <begin position="295"/>
        <end position="315"/>
    </location>
</feature>
<accession>D0ZWU0</accession>
<comment type="function">
    <text>Component of Salmonella pathogenicity island 2 (SPI-2) type III secretion system, required for secretion of some type III-secreted effectors including the SpvB exotoxin.</text>
</comment>
<comment type="subcellular location">
    <subcellularLocation>
        <location evidence="3">Cell inner membrane</location>
        <topology evidence="3">Multi-pass membrane protein</topology>
    </subcellularLocation>
</comment>
<comment type="disruption phenotype">
    <text evidence="2">15-fold reduction in cytopathic effects in human monocyte-derived macrophages.</text>
</comment>
<comment type="similarity">
    <text evidence="3">Belongs to the FHIPEP (flagella/HR/invasion proteins export pore) family.</text>
</comment>
<name>SSAV_SALT1</name>
<dbReference type="EMBL" id="CP001363">
    <property type="protein sequence ID" value="ACY88188.1"/>
    <property type="molecule type" value="Genomic_DNA"/>
</dbReference>
<dbReference type="RefSeq" id="WP_001258231.1">
    <property type="nucleotide sequence ID" value="NZ_CP043402.1"/>
</dbReference>
<dbReference type="SMR" id="D0ZWU0"/>
<dbReference type="KEGG" id="seo:STM14_1710"/>
<dbReference type="PATRIC" id="fig|588858.6.peg.1644"/>
<dbReference type="HOGENOM" id="CLU_015346_3_0_6"/>
<dbReference type="BioCyc" id="SENT588858:STM14_RS07925-MONOMER"/>
<dbReference type="PHI-base" id="PHI:10144"/>
<dbReference type="PHI-base" id="PHI:2621"/>
<dbReference type="PHI-base" id="PHI:6966"/>
<dbReference type="PHI-base" id="PHI:8303"/>
<dbReference type="PHI-base" id="PHI:9831"/>
<dbReference type="PHI-base" id="PHI:9832"/>
<dbReference type="PHI-base" id="PHI:9833"/>
<dbReference type="Proteomes" id="UP000002695">
    <property type="component" value="Chromosome"/>
</dbReference>
<dbReference type="GO" id="GO:0005886">
    <property type="term" value="C:plasma membrane"/>
    <property type="evidence" value="ECO:0007669"/>
    <property type="project" value="UniProtKB-SubCell"/>
</dbReference>
<dbReference type="GO" id="GO:0009306">
    <property type="term" value="P:protein secretion"/>
    <property type="evidence" value="ECO:0007669"/>
    <property type="project" value="InterPro"/>
</dbReference>
<dbReference type="Gene3D" id="3.40.30.60">
    <property type="entry name" value="FHIPEP family, domain 1"/>
    <property type="match status" value="1"/>
</dbReference>
<dbReference type="Gene3D" id="1.10.8.540">
    <property type="entry name" value="FHIPEP family, domain 3"/>
    <property type="match status" value="1"/>
</dbReference>
<dbReference type="Gene3D" id="3.40.50.12790">
    <property type="entry name" value="FHIPEP family, domain 4"/>
    <property type="match status" value="1"/>
</dbReference>
<dbReference type="InterPro" id="IPR042194">
    <property type="entry name" value="FHIPEP_1"/>
</dbReference>
<dbReference type="InterPro" id="IPR042193">
    <property type="entry name" value="FHIPEP_3"/>
</dbReference>
<dbReference type="InterPro" id="IPR042196">
    <property type="entry name" value="FHIPEP_4"/>
</dbReference>
<dbReference type="InterPro" id="IPR025505">
    <property type="entry name" value="FHIPEP_CS"/>
</dbReference>
<dbReference type="InterPro" id="IPR001712">
    <property type="entry name" value="T3SS_FHIPEP"/>
</dbReference>
<dbReference type="InterPro" id="IPR006302">
    <property type="entry name" value="T3SS_HrcV"/>
</dbReference>
<dbReference type="NCBIfam" id="TIGR01399">
    <property type="entry name" value="hrcV"/>
    <property type="match status" value="1"/>
</dbReference>
<dbReference type="NCBIfam" id="NF009363">
    <property type="entry name" value="PRK12720.1"/>
    <property type="match status" value="1"/>
</dbReference>
<dbReference type="PANTHER" id="PTHR30161">
    <property type="entry name" value="FLAGELLAR EXPORT PROTEIN, MEMBRANE FLHA SUBUNIT-RELATED"/>
    <property type="match status" value="1"/>
</dbReference>
<dbReference type="PANTHER" id="PTHR30161:SF3">
    <property type="entry name" value="SECRETION SYSTEM APPARATUS PROTEIN SSAV"/>
    <property type="match status" value="1"/>
</dbReference>
<dbReference type="Pfam" id="PF00771">
    <property type="entry name" value="FHIPEP"/>
    <property type="match status" value="1"/>
</dbReference>
<dbReference type="PIRSF" id="PIRSF005419">
    <property type="entry name" value="FlhA"/>
    <property type="match status" value="1"/>
</dbReference>
<dbReference type="PRINTS" id="PR00949">
    <property type="entry name" value="TYPE3IMAPROT"/>
</dbReference>
<dbReference type="PROSITE" id="PS00994">
    <property type="entry name" value="FHIPEP"/>
    <property type="match status" value="1"/>
</dbReference>
<sequence length="681" mass="75322">MRSWLGEGVRAQQWLSVCAGRQDMVLATVLLIAIVMMLLPLPTWMVDILITINLMFSVILLLIAIYLSDPLDLSVFPSLLLITTLYRLSLTISTSRLVLLQHNAGNIVDAFGKFVVGGNLTVGLVVFTIITIVQFIVITKGIERVAEVSARFSLDGMPGKQMSIDGDLRAGVIDADHARTLRQHVQQESRFLGAMDGAMKFVKGDTIAGIIVVLVNIIGGIIIAIVQYDMSMSEAVHTYSVLSIGDGLCGQIPSLLISLSAGIIVTRVPGEKRQNLATELSSQIARQPQSLILTAVVLMLLALIPGFPFITLAFFSALLALPIILIRRKKSVVSANGVEAPEKDSMVPGACPLILRLSPTLHSADLIRDIDAMRWFLFEDTGVPLPEVNIEVLPEPTEKLTVLLYQEPVFSLSIPAQADYLLIGADASVVGDSQTLPNGMGQICWLTKDMAHKAQGFGLDVFAGSQRISALLKCVLLRHMGEFIGVQETRYLMNAMEKNYSELVKELQRQLPINKIAETLQRLVSERVSIRDLRLIFGTLIDWAPREKDVLMLTEYVRIALRRHILRRLNPEGKPLPILRIGEGIENLVRESIRQTAMGTYTALSSRHKTQILQLIEQALKQSAKLFIVTSVDTRRFLRKITEATLFDVPILSWQELGEESLIQVVESIDLSEEELADNEE</sequence>
<proteinExistence type="inferred from homology"/>
<keyword id="KW-0997">Cell inner membrane</keyword>
<keyword id="KW-1003">Cell membrane</keyword>
<keyword id="KW-0472">Membrane</keyword>
<keyword id="KW-0653">Protein transport</keyword>
<keyword id="KW-0812">Transmembrane</keyword>
<keyword id="KW-1133">Transmembrane helix</keyword>
<keyword id="KW-0813">Transport</keyword>
<gene>
    <name type="primary">ssaV</name>
    <name type="ordered locus">STM14_1710</name>
</gene>
<evidence type="ECO:0000255" key="1"/>
<evidence type="ECO:0000269" key="2">
    <source>
    </source>
</evidence>
<evidence type="ECO:0000305" key="3"/>